<proteinExistence type="inferred from homology"/>
<feature type="chain" id="PRO_0000260648" description="1,4-alpha-glucan branching enzyme GlgB">
    <location>
        <begin position="1"/>
        <end position="711"/>
    </location>
</feature>
<feature type="active site" description="Nucleophile" evidence="1">
    <location>
        <position position="392"/>
    </location>
</feature>
<feature type="active site" description="Proton donor" evidence="1">
    <location>
        <position position="443"/>
    </location>
</feature>
<keyword id="KW-0119">Carbohydrate metabolism</keyword>
<keyword id="KW-0320">Glycogen biosynthesis</keyword>
<keyword id="KW-0321">Glycogen metabolism</keyword>
<keyword id="KW-0328">Glycosyltransferase</keyword>
<keyword id="KW-1185">Reference proteome</keyword>
<keyword id="KW-0808">Transferase</keyword>
<protein>
    <recommendedName>
        <fullName evidence="1">1,4-alpha-glucan branching enzyme GlgB</fullName>
        <ecNumber evidence="1">2.4.1.18</ecNumber>
    </recommendedName>
    <alternativeName>
        <fullName evidence="1">1,4-alpha-D-glucan:1,4-alpha-D-glucan 6-glucosyl-transferase</fullName>
    </alternativeName>
    <alternativeName>
        <fullName evidence="1">Alpha-(1-&gt;4)-glucan branching enzyme</fullName>
    </alternativeName>
    <alternativeName>
        <fullName evidence="1">Glycogen branching enzyme</fullName>
        <shortName evidence="1">BE</shortName>
    </alternativeName>
</protein>
<dbReference type="EC" id="2.4.1.18" evidence="1"/>
<dbReference type="EMBL" id="CR931997">
    <property type="protein sequence ID" value="CAI37502.1"/>
    <property type="molecule type" value="Genomic_DNA"/>
</dbReference>
<dbReference type="RefSeq" id="WP_011273817.1">
    <property type="nucleotide sequence ID" value="NC_007164.1"/>
</dbReference>
<dbReference type="SMR" id="Q4JUK5"/>
<dbReference type="STRING" id="306537.jk1330"/>
<dbReference type="CAZy" id="CBM48">
    <property type="family name" value="Carbohydrate-Binding Module Family 48"/>
</dbReference>
<dbReference type="CAZy" id="GH13">
    <property type="family name" value="Glycoside Hydrolase Family 13"/>
</dbReference>
<dbReference type="KEGG" id="cjk:jk1330"/>
<dbReference type="PATRIC" id="fig|306537.10.peg.1350"/>
<dbReference type="eggNOG" id="COG0296">
    <property type="taxonomic scope" value="Bacteria"/>
</dbReference>
<dbReference type="HOGENOM" id="CLU_004245_3_2_11"/>
<dbReference type="OrthoDB" id="9800174at2"/>
<dbReference type="UniPathway" id="UPA00164"/>
<dbReference type="Proteomes" id="UP000000545">
    <property type="component" value="Chromosome"/>
</dbReference>
<dbReference type="GO" id="GO:0005829">
    <property type="term" value="C:cytosol"/>
    <property type="evidence" value="ECO:0007669"/>
    <property type="project" value="TreeGrafter"/>
</dbReference>
<dbReference type="GO" id="GO:0003844">
    <property type="term" value="F:1,4-alpha-glucan branching enzyme activity"/>
    <property type="evidence" value="ECO:0007669"/>
    <property type="project" value="UniProtKB-UniRule"/>
</dbReference>
<dbReference type="GO" id="GO:0043169">
    <property type="term" value="F:cation binding"/>
    <property type="evidence" value="ECO:0007669"/>
    <property type="project" value="InterPro"/>
</dbReference>
<dbReference type="GO" id="GO:0004553">
    <property type="term" value="F:hydrolase activity, hydrolyzing O-glycosyl compounds"/>
    <property type="evidence" value="ECO:0007669"/>
    <property type="project" value="InterPro"/>
</dbReference>
<dbReference type="GO" id="GO:0005978">
    <property type="term" value="P:glycogen biosynthetic process"/>
    <property type="evidence" value="ECO:0007669"/>
    <property type="project" value="UniProtKB-UniRule"/>
</dbReference>
<dbReference type="CDD" id="cd11322">
    <property type="entry name" value="AmyAc_Glg_BE"/>
    <property type="match status" value="1"/>
</dbReference>
<dbReference type="CDD" id="cd02855">
    <property type="entry name" value="E_set_GBE_prok_N"/>
    <property type="match status" value="1"/>
</dbReference>
<dbReference type="FunFam" id="2.60.40.1180:FF:000002">
    <property type="entry name" value="1,4-alpha-glucan branching enzyme GlgB"/>
    <property type="match status" value="1"/>
</dbReference>
<dbReference type="FunFam" id="3.20.20.80:FF:000003">
    <property type="entry name" value="1,4-alpha-glucan branching enzyme GlgB"/>
    <property type="match status" value="1"/>
</dbReference>
<dbReference type="Gene3D" id="3.20.20.80">
    <property type="entry name" value="Glycosidases"/>
    <property type="match status" value="1"/>
</dbReference>
<dbReference type="Gene3D" id="2.60.40.1180">
    <property type="entry name" value="Golgi alpha-mannosidase II"/>
    <property type="match status" value="1"/>
</dbReference>
<dbReference type="Gene3D" id="2.60.40.10">
    <property type="entry name" value="Immunoglobulins"/>
    <property type="match status" value="2"/>
</dbReference>
<dbReference type="HAMAP" id="MF_00685">
    <property type="entry name" value="GlgB"/>
    <property type="match status" value="1"/>
</dbReference>
<dbReference type="InterPro" id="IPR006048">
    <property type="entry name" value="A-amylase/branching_C"/>
</dbReference>
<dbReference type="InterPro" id="IPR037439">
    <property type="entry name" value="Branching_enzy"/>
</dbReference>
<dbReference type="InterPro" id="IPR006407">
    <property type="entry name" value="GlgB"/>
</dbReference>
<dbReference type="InterPro" id="IPR054169">
    <property type="entry name" value="GlgB_N"/>
</dbReference>
<dbReference type="InterPro" id="IPR044143">
    <property type="entry name" value="GlgB_N_E_set_prok"/>
</dbReference>
<dbReference type="InterPro" id="IPR006047">
    <property type="entry name" value="Glyco_hydro_13_cat_dom"/>
</dbReference>
<dbReference type="InterPro" id="IPR004193">
    <property type="entry name" value="Glyco_hydro_13_N"/>
</dbReference>
<dbReference type="InterPro" id="IPR013780">
    <property type="entry name" value="Glyco_hydro_b"/>
</dbReference>
<dbReference type="InterPro" id="IPR017853">
    <property type="entry name" value="Glycoside_hydrolase_SF"/>
</dbReference>
<dbReference type="InterPro" id="IPR013783">
    <property type="entry name" value="Ig-like_fold"/>
</dbReference>
<dbReference type="InterPro" id="IPR014756">
    <property type="entry name" value="Ig_E-set"/>
</dbReference>
<dbReference type="NCBIfam" id="TIGR01515">
    <property type="entry name" value="branching_enzym"/>
    <property type="match status" value="1"/>
</dbReference>
<dbReference type="NCBIfam" id="NF003811">
    <property type="entry name" value="PRK05402.1"/>
    <property type="match status" value="1"/>
</dbReference>
<dbReference type="NCBIfam" id="NF008967">
    <property type="entry name" value="PRK12313.1"/>
    <property type="match status" value="1"/>
</dbReference>
<dbReference type="PANTHER" id="PTHR43651">
    <property type="entry name" value="1,4-ALPHA-GLUCAN-BRANCHING ENZYME"/>
    <property type="match status" value="1"/>
</dbReference>
<dbReference type="PANTHER" id="PTHR43651:SF3">
    <property type="entry name" value="1,4-ALPHA-GLUCAN-BRANCHING ENZYME"/>
    <property type="match status" value="1"/>
</dbReference>
<dbReference type="Pfam" id="PF00128">
    <property type="entry name" value="Alpha-amylase"/>
    <property type="match status" value="2"/>
</dbReference>
<dbReference type="Pfam" id="PF02806">
    <property type="entry name" value="Alpha-amylase_C"/>
    <property type="match status" value="1"/>
</dbReference>
<dbReference type="Pfam" id="PF02922">
    <property type="entry name" value="CBM_48"/>
    <property type="match status" value="1"/>
</dbReference>
<dbReference type="Pfam" id="PF22019">
    <property type="entry name" value="GlgB_N"/>
    <property type="match status" value="1"/>
</dbReference>
<dbReference type="PIRSF" id="PIRSF000463">
    <property type="entry name" value="GlgB"/>
    <property type="match status" value="1"/>
</dbReference>
<dbReference type="SMART" id="SM00642">
    <property type="entry name" value="Aamy"/>
    <property type="match status" value="1"/>
</dbReference>
<dbReference type="SUPFAM" id="SSF51445">
    <property type="entry name" value="(Trans)glycosidases"/>
    <property type="match status" value="1"/>
</dbReference>
<dbReference type="SUPFAM" id="SSF81296">
    <property type="entry name" value="E set domains"/>
    <property type="match status" value="2"/>
</dbReference>
<dbReference type="SUPFAM" id="SSF51011">
    <property type="entry name" value="Glycosyl hydrolase domain"/>
    <property type="match status" value="1"/>
</dbReference>
<gene>
    <name evidence="1" type="primary">glgB</name>
    <name type="ordered locus">jk1330</name>
</gene>
<sequence>MNHDYHRLAERRHHAPHDVLGAHENGDGTTTIRTVQCGAESVAVRINGGEPVQMVPAEEYPALFTATVDYFVDTYNFEVTWAGGTAATLEDPYRRLPTVGDLDRYLIGEGRHEELWKVLGAHVVDGGVAFSVWAPHAAGVSVIGDFNGWNANQHPLRALGSSGIWELWIPSVSAGAHYKFSITTGDGVRLDKADPMARLAEPAPATASIVVADSDYAWGDDEWLAHRAAVGVDETMSIYEMHLGSWRKGRSYRELAVELVEYVQELGYTHVELMGVSEHPFEPSWGYQVTSYYAPNNRYGGPDDLRYLIDSLHRAGIGVIMDWVPGHFPKDGWALGRFDGEACYEHPDPRRGEQPDWGTYVFDFGRNEVRNFLVANALYWCKEFHIDGLRVDAVASMLYLDYSRDDWLPNQYGGRENLDAVEFLKEMNATVHRECPGSLTIAEESTSWPGVTAPTSEGGLGFSLKWNMGWMHDSLEYIQRDPAYRSYHHNEITFSMVYAYSENYVLPISHDEVVHGKGTLWSRMPAGSAWDKAAMVRSYLAFMWAHPGKKLLFQGQEWGQTEEWNESRGLDWHDLEGWEGEFHRGISALTSQLNKLYHSELALGQDHAPEGFQWIASDDSTNNVLSFIRRHRGRELACVINFSGTTQENYRIGLPQAGTWREVLNTDDVQYEGAGRVNGDLHTEPTGSHGMEASAVLQIPAHTARWFVLES</sequence>
<evidence type="ECO:0000255" key="1">
    <source>
        <dbReference type="HAMAP-Rule" id="MF_00685"/>
    </source>
</evidence>
<accession>Q4JUK5</accession>
<reference key="1">
    <citation type="journal article" date="2005" name="J. Bacteriol.">
        <title>Complete genome sequence and analysis of the multiresistant nosocomial pathogen Corynebacterium jeikeium K411, a lipid-requiring bacterium of the human skin flora.</title>
        <authorList>
            <person name="Tauch A."/>
            <person name="Kaiser O."/>
            <person name="Hain T."/>
            <person name="Goesmann A."/>
            <person name="Weisshaar B."/>
            <person name="Albersmeier A."/>
            <person name="Bekel T."/>
            <person name="Bischoff N."/>
            <person name="Brune I."/>
            <person name="Chakraborty T."/>
            <person name="Kalinowski J."/>
            <person name="Meyer F."/>
            <person name="Rupp O."/>
            <person name="Schneiker S."/>
            <person name="Viehoever P."/>
            <person name="Puehler A."/>
        </authorList>
    </citation>
    <scope>NUCLEOTIDE SEQUENCE [LARGE SCALE GENOMIC DNA]</scope>
    <source>
        <strain>K411</strain>
    </source>
</reference>
<name>GLGB_CORJK</name>
<organism>
    <name type="scientific">Corynebacterium jeikeium (strain K411)</name>
    <dbReference type="NCBI Taxonomy" id="306537"/>
    <lineage>
        <taxon>Bacteria</taxon>
        <taxon>Bacillati</taxon>
        <taxon>Actinomycetota</taxon>
        <taxon>Actinomycetes</taxon>
        <taxon>Mycobacteriales</taxon>
        <taxon>Corynebacteriaceae</taxon>
        <taxon>Corynebacterium</taxon>
    </lineage>
</organism>
<comment type="function">
    <text evidence="1">Catalyzes the formation of the alpha-1,6-glucosidic linkages in glycogen by scission of a 1,4-alpha-linked oligosaccharide from growing alpha-1,4-glucan chains and the subsequent attachment of the oligosaccharide to the alpha-1,6 position.</text>
</comment>
<comment type="catalytic activity">
    <reaction evidence="1">
        <text>Transfers a segment of a (1-&gt;4)-alpha-D-glucan chain to a primary hydroxy group in a similar glucan chain.</text>
        <dbReference type="EC" id="2.4.1.18"/>
    </reaction>
</comment>
<comment type="pathway">
    <text evidence="1">Glycan biosynthesis; glycogen biosynthesis.</text>
</comment>
<comment type="subunit">
    <text evidence="1">Monomer.</text>
</comment>
<comment type="similarity">
    <text evidence="1">Belongs to the glycosyl hydrolase 13 family. GlgB subfamily.</text>
</comment>